<accession>O42184</accession>
<accession>O42228</accession>
<accession>O57563</accession>
<accession>O57564</accession>
<name>CLIP1_CHICK</name>
<feature type="chain" id="PRO_0000083528" description="CAP-Gly domain-containing linker protein 1">
    <location>
        <begin position="1"/>
        <end position="1433"/>
    </location>
</feature>
<feature type="domain" description="CAP-Gly 1" evidence="4">
    <location>
        <begin position="79"/>
        <end position="121"/>
    </location>
</feature>
<feature type="domain" description="CAP-Gly 2" evidence="4">
    <location>
        <begin position="235"/>
        <end position="277"/>
    </location>
</feature>
<feature type="zinc finger region" description="CCHC-type">
    <location>
        <begin position="1412"/>
        <end position="1429"/>
    </location>
</feature>
<feature type="region of interest" description="Disordered" evidence="5">
    <location>
        <begin position="1"/>
        <end position="51"/>
    </location>
</feature>
<feature type="region of interest" description="Disordered" evidence="5">
    <location>
        <begin position="133"/>
        <end position="208"/>
    </location>
</feature>
<feature type="region of interest" description="Disordered" evidence="5">
    <location>
        <begin position="319"/>
        <end position="338"/>
    </location>
</feature>
<feature type="coiled-coil region" evidence="3">
    <location>
        <begin position="351"/>
        <end position="1353"/>
    </location>
</feature>
<feature type="compositionally biased region" description="Low complexity" evidence="5">
    <location>
        <begin position="32"/>
        <end position="49"/>
    </location>
</feature>
<feature type="compositionally biased region" description="Low complexity" evidence="5">
    <location>
        <begin position="140"/>
        <end position="168"/>
    </location>
</feature>
<feature type="compositionally biased region" description="Polar residues" evidence="5">
    <location>
        <begin position="184"/>
        <end position="204"/>
    </location>
</feature>
<feature type="compositionally biased region" description="Low complexity" evidence="5">
    <location>
        <begin position="319"/>
        <end position="333"/>
    </location>
</feature>
<feature type="splice variant" id="VSP_000761" description="In isoform 2." evidence="7">
    <location>
        <begin position="458"/>
        <end position="492"/>
    </location>
</feature>
<feature type="splice variant" id="VSP_000762" description="In isoform 3." evidence="6">
    <original>TQTKLEHARIKELEQSLLFEKTKADKLQRELEDTR</original>
    <variation>RKRQISEDPEN</variation>
    <location>
        <begin position="458"/>
        <end position="492"/>
    </location>
</feature>
<feature type="splice variant" id="VSP_000764" description="In isoform 4." evidence="6">
    <original>T</original>
    <variation>RKRQISEDPENT</variation>
    <location>
        <position position="458"/>
    </location>
</feature>
<feature type="splice variant" id="VSP_000763" description="In isoform 3." evidence="6">
    <original>S</original>
    <variation>GGSSKVS</variation>
    <location>
        <position position="803"/>
    </location>
</feature>
<feature type="sequence conflict" description="In Ref. 2; AAC03547." evidence="7" ref="2">
    <original>K</original>
    <variation>R</variation>
    <location>
        <position position="309"/>
    </location>
</feature>
<feature type="sequence conflict" description="In Ref. 2; AAC03548." evidence="7" ref="2">
    <original>E</original>
    <variation>V</variation>
    <location>
        <position position="440"/>
    </location>
</feature>
<protein>
    <recommendedName>
        <fullName>CAP-Gly domain-containing linker protein 1</fullName>
    </recommendedName>
    <alternativeName>
        <fullName>Cytoplasmic linker protein 170</fullName>
        <shortName>CLIP-170</shortName>
    </alternativeName>
    <alternativeName>
        <fullName>Restin</fullName>
    </alternativeName>
</protein>
<dbReference type="EMBL" id="AF014012">
    <property type="protein sequence ID" value="AAC60344.1"/>
    <property type="molecule type" value="mRNA"/>
</dbReference>
<dbReference type="EMBL" id="AF020764">
    <property type="protein sequence ID" value="AAC60345.1"/>
    <property type="molecule type" value="mRNA"/>
</dbReference>
<dbReference type="EMBL" id="AF045650">
    <property type="protein sequence ID" value="AAC03547.1"/>
    <property type="molecule type" value="mRNA"/>
</dbReference>
<dbReference type="EMBL" id="AF045651">
    <property type="protein sequence ID" value="AAC03548.1"/>
    <property type="molecule type" value="mRNA"/>
</dbReference>
<dbReference type="RefSeq" id="NP_001383593.1">
    <molecule id="O42184-1"/>
    <property type="nucleotide sequence ID" value="NM_001396664.1"/>
</dbReference>
<dbReference type="RefSeq" id="NP_990273.1">
    <property type="nucleotide sequence ID" value="NM_204942.1"/>
</dbReference>
<dbReference type="SMR" id="O42184"/>
<dbReference type="FunCoup" id="O42184">
    <property type="interactions" value="2342"/>
</dbReference>
<dbReference type="STRING" id="9031.ENSGALP00000067447"/>
<dbReference type="PaxDb" id="9031-ENSGALP00000007101"/>
<dbReference type="GeneID" id="395784"/>
<dbReference type="KEGG" id="gga:395784"/>
<dbReference type="VEuPathDB" id="HostDB:geneid_395784"/>
<dbReference type="eggNOG" id="KOG4568">
    <property type="taxonomic scope" value="Eukaryota"/>
</dbReference>
<dbReference type="InParanoid" id="O42184"/>
<dbReference type="OrthoDB" id="5412539at2759"/>
<dbReference type="PhylomeDB" id="O42184"/>
<dbReference type="TreeFam" id="TF326096"/>
<dbReference type="Reactome" id="R-GGA-141444">
    <property type="pathway name" value="Amplification of signal from unattached kinetochores via a MAD2 inhibitory signal"/>
</dbReference>
<dbReference type="Reactome" id="R-GGA-2467813">
    <property type="pathway name" value="Separation of Sister Chromatids"/>
</dbReference>
<dbReference type="Reactome" id="R-GGA-2500257">
    <property type="pathway name" value="Resolution of Sister Chromatid Cohesion"/>
</dbReference>
<dbReference type="Reactome" id="R-GGA-5663220">
    <property type="pathway name" value="RHO GTPases Activate Formins"/>
</dbReference>
<dbReference type="Reactome" id="R-GGA-9648025">
    <property type="pathway name" value="EML4 and NUDC in mitotic spindle formation"/>
</dbReference>
<dbReference type="PRO" id="PR:O42184"/>
<dbReference type="Proteomes" id="UP000000539">
    <property type="component" value="Chromosome 15"/>
</dbReference>
<dbReference type="Bgee" id="ENSGALG00000004467">
    <property type="expression patterns" value="Expressed in muscle tissue and 13 other cell types or tissues"/>
</dbReference>
<dbReference type="GO" id="GO:0005938">
    <property type="term" value="C:cell cortex"/>
    <property type="evidence" value="ECO:0000318"/>
    <property type="project" value="GO_Central"/>
</dbReference>
<dbReference type="GO" id="GO:0030659">
    <property type="term" value="C:cytoplasmic vesicle membrane"/>
    <property type="evidence" value="ECO:0007669"/>
    <property type="project" value="UniProtKB-SubCell"/>
</dbReference>
<dbReference type="GO" id="GO:0035371">
    <property type="term" value="C:microtubule plus-end"/>
    <property type="evidence" value="ECO:0000250"/>
    <property type="project" value="UniProtKB"/>
</dbReference>
<dbReference type="GO" id="GO:0005634">
    <property type="term" value="C:nucleus"/>
    <property type="evidence" value="ECO:0000318"/>
    <property type="project" value="GO_Central"/>
</dbReference>
<dbReference type="GO" id="GO:0001726">
    <property type="term" value="C:ruffle"/>
    <property type="evidence" value="ECO:0007669"/>
    <property type="project" value="UniProtKB-SubCell"/>
</dbReference>
<dbReference type="GO" id="GO:0008017">
    <property type="term" value="F:microtubule binding"/>
    <property type="evidence" value="ECO:0000250"/>
    <property type="project" value="UniProtKB"/>
</dbReference>
<dbReference type="GO" id="GO:0051010">
    <property type="term" value="F:microtubule plus-end binding"/>
    <property type="evidence" value="ECO:0000318"/>
    <property type="project" value="GO_Central"/>
</dbReference>
<dbReference type="GO" id="GO:0008270">
    <property type="term" value="F:zinc ion binding"/>
    <property type="evidence" value="ECO:0007669"/>
    <property type="project" value="UniProtKB-KW"/>
</dbReference>
<dbReference type="GO" id="GO:0031122">
    <property type="term" value="P:cytoplasmic microtubule organization"/>
    <property type="evidence" value="ECO:0000318"/>
    <property type="project" value="GO_Central"/>
</dbReference>
<dbReference type="GO" id="GO:0031116">
    <property type="term" value="P:positive regulation of microtubule polymerization"/>
    <property type="evidence" value="ECO:0000318"/>
    <property type="project" value="GO_Central"/>
</dbReference>
<dbReference type="FunFam" id="2.30.30.190:FF:000002">
    <property type="entry name" value="CAP-Gly domain containing linker protein 1"/>
    <property type="match status" value="1"/>
</dbReference>
<dbReference type="FunFam" id="2.30.30.190:FF:000001">
    <property type="entry name" value="Putative CAP-Gly domain-containing linker protein 1"/>
    <property type="match status" value="1"/>
</dbReference>
<dbReference type="Gene3D" id="2.30.30.190">
    <property type="entry name" value="CAP Gly-rich-like domain"/>
    <property type="match status" value="2"/>
</dbReference>
<dbReference type="InterPro" id="IPR036859">
    <property type="entry name" value="CAP-Gly_dom_sf"/>
</dbReference>
<dbReference type="InterPro" id="IPR000938">
    <property type="entry name" value="CAP-Gly_domain"/>
</dbReference>
<dbReference type="InterPro" id="IPR032108">
    <property type="entry name" value="CLIP1_ZNF"/>
</dbReference>
<dbReference type="PANTHER" id="PTHR18916:SF44">
    <property type="entry name" value="CAP-GLY DOMAIN-CONTAINING LINKER PROTEIN 1"/>
    <property type="match status" value="1"/>
</dbReference>
<dbReference type="PANTHER" id="PTHR18916">
    <property type="entry name" value="DYNACTIN 1-RELATED MICROTUBULE-BINDING"/>
    <property type="match status" value="1"/>
</dbReference>
<dbReference type="Pfam" id="PF01302">
    <property type="entry name" value="CAP_GLY"/>
    <property type="match status" value="2"/>
</dbReference>
<dbReference type="Pfam" id="PF16641">
    <property type="entry name" value="CLIP1_ZNF"/>
    <property type="match status" value="2"/>
</dbReference>
<dbReference type="SMART" id="SM01052">
    <property type="entry name" value="CAP_GLY"/>
    <property type="match status" value="2"/>
</dbReference>
<dbReference type="SUPFAM" id="SSF74924">
    <property type="entry name" value="Cap-Gly domain"/>
    <property type="match status" value="2"/>
</dbReference>
<dbReference type="PROSITE" id="PS00845">
    <property type="entry name" value="CAP_GLY_1"/>
    <property type="match status" value="2"/>
</dbReference>
<dbReference type="PROSITE" id="PS50245">
    <property type="entry name" value="CAP_GLY_2"/>
    <property type="match status" value="2"/>
</dbReference>
<sequence length="1433" mass="161027">MSMLKPSGLKAPSKTIKHGSTLLKAPASVATAPAEKAPSSEKSSSTTTADAHDDFVDDFRVGERVWVNGNKPGFIQFLGETQFAPGQWAGIVLDEPIGKNDGSVAGVRYFQCEPLRGIFTRPSKLSRKVLTEDEANGTQTAHASRATSPTSTSTASAVSASPAALLPSGIPQKTSPLAAKEHSTPSQFSNLSKTASGSVSNLSEAGSLKKGERELKIGDRVLVGGTKAGVVRFLGETDFAKGEWCGVELDEPLGKNDGAVAGTRYFQCQPRYGLFAPVHKVTKIGFPSTTPAKAKTTVRKVVATPAALKRSPSASSLSSLSSVASSVSSKPSRTGLLTETSSRYARKISGTTALQEALKEKQQHIEQLLAERDLERAEVAKATSHVGEIEQELALVRDGHDRHVLEMEAKMDQLRAMVEAADREKVELLNQLEEEKRKVEDLQFRVEEESITKGDLETQTKLEHARIKELEQSLLFEKTKADKLQRELEDTRVATVSEKSRIMELERDLALRVKEVAELRGRLESSKHIDDVDTSLSLLQEISSLQEKMAAAGKEHQREMSSLKEKFESSEEALRKEIKTLSASNERMGKENESLKTKLDHANKENSDVIELWKSKLESAIASHQQAMEELKVSFNKGVGAQTAEFAELKTQMEKVKLDYENEMSNLKLKQENEKSQHLKEIEALKAKLLEVTEEKEQTLENLKAKLESVEDQHLVEMEDTLNKLQEAEIKVKELDVLQAKCNEQTKLIGSLTQQIRASEEKLLDLAALQKANSEGKLEIQKLSEQLQAAEKQIQNLETEKVSNLTKELQGKEQKLLDLEKNLSAVNQVKDSLEKELQLLKEKFTSAVDGAENAQRAMQETINKLNQKEEQFALMSSELEQLKSNLTVMETKLKEREEREQQLTEAKVKLENDIAEIMKSSGDSSAQLMKMNDELRLKERQLEQIQLELTKANEKAVQLQKNVEQTAQKAEQSQQETLKTHQEELKKMQDQLTDMKKQMETSQNQYKDLQAKYEKETSEMITKHDADIKGFKQNLLDAEEALKAAQKKNDELETQAEELKKQAEQAKADKRAEEVLQTMEKVTKEKDAIHQEKIETLASLENSRQTNEKLQNELDMLKQNNLKNEEELTKSKELLNLENKKVEELKKEFEALKLAAAQKSQQLAALQEENVKLAEELGRSRDEVTSHQKLEEERSVLNNQLLEMKKRESTLKKEIDEERASLQKSISDTSALITQKDEELEKLRNEITVLRGENASAKTLQSVVKTLESDKLKLEEKVKNLEQKLKAKSEQPLTVTSPSGDIAANLLQDESAEDKQQEIDFLNSVIVDLQRRNEELNLKIQRMCEAALNGNEEETINYDSEEEGLSKKTPRLFCDICGCFDLHDTEDCPTQAQMLEEPPHSTYHGSRREERPYCDTCEMFGHWTADCNDDETF</sequence>
<evidence type="ECO:0000250" key="1"/>
<evidence type="ECO:0000250" key="2">
    <source>
        <dbReference type="UniProtKB" id="P30622"/>
    </source>
</evidence>
<evidence type="ECO:0000255" key="3"/>
<evidence type="ECO:0000255" key="4">
    <source>
        <dbReference type="PROSITE-ProRule" id="PRU00045"/>
    </source>
</evidence>
<evidence type="ECO:0000256" key="5">
    <source>
        <dbReference type="SAM" id="MobiDB-lite"/>
    </source>
</evidence>
<evidence type="ECO:0000303" key="6">
    <source>
    </source>
</evidence>
<evidence type="ECO:0000305" key="7"/>
<reference key="1">
    <citation type="journal article" date="1998" name="Gene">
        <title>Cloning and expression of chicken CLIP-170 and restin isoforms.</title>
        <authorList>
            <person name="Griparic L."/>
            <person name="Volosky J.M."/>
            <person name="Keller T.C. III"/>
        </authorList>
    </citation>
    <scope>NUCLEOTIDE SEQUENCE [MRNA]</scope>
</reference>
<reference key="2">
    <citation type="journal article" date="1998" name="Biochim. Biophys. Acta">
        <title>Identification and expression of two novel CLIP-170/Restin isoforms expressed predominantly in muscle.</title>
        <authorList>
            <person name="Griparic L."/>
            <person name="Keller T.C. III"/>
        </authorList>
    </citation>
    <scope>NUCLEOTIDE SEQUENCE [MRNA] OF 17-1139 (ISOFORMS 3 AND 4)</scope>
    <source>
        <tissue>Pectoralis muscle</tissue>
    </source>
</reference>
<organism>
    <name type="scientific">Gallus gallus</name>
    <name type="common">Chicken</name>
    <dbReference type="NCBI Taxonomy" id="9031"/>
    <lineage>
        <taxon>Eukaryota</taxon>
        <taxon>Metazoa</taxon>
        <taxon>Chordata</taxon>
        <taxon>Craniata</taxon>
        <taxon>Vertebrata</taxon>
        <taxon>Euteleostomi</taxon>
        <taxon>Archelosauria</taxon>
        <taxon>Archosauria</taxon>
        <taxon>Dinosauria</taxon>
        <taxon>Saurischia</taxon>
        <taxon>Theropoda</taxon>
        <taxon>Coelurosauria</taxon>
        <taxon>Aves</taxon>
        <taxon>Neognathae</taxon>
        <taxon>Galloanserae</taxon>
        <taxon>Galliformes</taxon>
        <taxon>Phasianidae</taxon>
        <taxon>Phasianinae</taxon>
        <taxon>Gallus</taxon>
    </lineage>
</organism>
<gene>
    <name type="primary">CLIP1</name>
    <name type="synonym">RSN</name>
</gene>
<comment type="function">
    <text evidence="2">Binds to the plus end of microtubules and regulates the dynamics of the microtubule cytoskeleton. Promotes microtubule growth and microtubule bundling. Links cytoplasmic vesicles to microtubules and thereby plays an important role in intracellular vesicle trafficking. Plays a role macropinocytosis and endosome trafficking.</text>
</comment>
<comment type="subcellular location">
    <subcellularLocation>
        <location evidence="2">Cytoplasm</location>
    </subcellularLocation>
    <subcellularLocation>
        <location evidence="2">Cytoplasm</location>
        <location evidence="2">Cytoskeleton</location>
    </subcellularLocation>
    <subcellularLocation>
        <location evidence="2">Cytoplasmic vesicle membrane</location>
        <topology evidence="1">Peripheral membrane protein</topology>
        <orientation evidence="1">Cytoplasmic side</orientation>
    </subcellularLocation>
    <subcellularLocation>
        <location evidence="2">Cell projection</location>
        <location evidence="2">Ruffle</location>
    </subcellularLocation>
    <text evidence="2">Localizes to microtubule plus ends. Localizes preferentially to the ends of tyrosinated microtubules. Accumulates in plasma membrane regions with ruffling and protrusions. Associates with the membranes of intermediate macropinocytic vesicles.</text>
</comment>
<comment type="alternative products">
    <event type="alternative splicing"/>
    <isoform>
        <id>O42184-1</id>
        <name>1</name>
        <sequence type="displayed"/>
    </isoform>
    <isoform>
        <id>O42184-2</id>
        <name>2</name>
        <sequence type="described" ref="VSP_000761"/>
    </isoform>
    <isoform>
        <id>O42184-3</id>
        <name>3</name>
        <name>CLIP-170(11)</name>
        <sequence type="described" ref="VSP_000762 VSP_000763"/>
    </isoform>
    <isoform>
        <id>O42184-4</id>
        <name>4</name>
        <name>CLIP-170(11+35)</name>
        <sequence type="described" ref="VSP_000764"/>
    </isoform>
    <text>Additional isoforms seem to exist.</text>
</comment>
<comment type="domain">
    <text evidence="2">Intramolecular interaction between the zinc finger domain and the CAP-Gly domains may inhibit interaction with tubulin.</text>
</comment>
<keyword id="KW-0025">Alternative splicing</keyword>
<keyword id="KW-0966">Cell projection</keyword>
<keyword id="KW-0175">Coiled coil</keyword>
<keyword id="KW-0963">Cytoplasm</keyword>
<keyword id="KW-0968">Cytoplasmic vesicle</keyword>
<keyword id="KW-0206">Cytoskeleton</keyword>
<keyword id="KW-0472">Membrane</keyword>
<keyword id="KW-0479">Metal-binding</keyword>
<keyword id="KW-0493">Microtubule</keyword>
<keyword id="KW-1185">Reference proteome</keyword>
<keyword id="KW-0677">Repeat</keyword>
<keyword id="KW-0813">Transport</keyword>
<keyword id="KW-0862">Zinc</keyword>
<keyword id="KW-0863">Zinc-finger</keyword>
<proteinExistence type="evidence at transcript level"/>